<name>MTAD_CALS4</name>
<gene>
    <name evidence="1" type="primary">mtaD</name>
    <name type="ordered locus">TTE1593</name>
</gene>
<reference key="1">
    <citation type="journal article" date="2002" name="Genome Res.">
        <title>A complete sequence of the T. tengcongensis genome.</title>
        <authorList>
            <person name="Bao Q."/>
            <person name="Tian Y."/>
            <person name="Li W."/>
            <person name="Xu Z."/>
            <person name="Xuan Z."/>
            <person name="Hu S."/>
            <person name="Dong W."/>
            <person name="Yang J."/>
            <person name="Chen Y."/>
            <person name="Xue Y."/>
            <person name="Xu Y."/>
            <person name="Lai X."/>
            <person name="Huang L."/>
            <person name="Dong X."/>
            <person name="Ma Y."/>
            <person name="Ling L."/>
            <person name="Tan H."/>
            <person name="Chen R."/>
            <person name="Wang J."/>
            <person name="Yu J."/>
            <person name="Yang H."/>
        </authorList>
    </citation>
    <scope>NUCLEOTIDE SEQUENCE [LARGE SCALE GENOMIC DNA]</scope>
    <source>
        <strain>DSM 15242 / JCM 11007 / NBRC 100824 / MB4</strain>
    </source>
</reference>
<protein>
    <recommendedName>
        <fullName evidence="1">5-methylthioadenosine/S-adenosylhomocysteine deaminase</fullName>
        <shortName evidence="1">MTA/SAH deaminase</shortName>
        <ecNumber evidence="1">3.5.4.28</ecNumber>
        <ecNumber evidence="1">3.5.4.31</ecNumber>
    </recommendedName>
</protein>
<dbReference type="EC" id="3.5.4.28" evidence="1"/>
<dbReference type="EC" id="3.5.4.31" evidence="1"/>
<dbReference type="EMBL" id="AE008691">
    <property type="protein sequence ID" value="AAM24797.1"/>
    <property type="molecule type" value="Genomic_DNA"/>
</dbReference>
<dbReference type="RefSeq" id="WP_011025828.1">
    <property type="nucleotide sequence ID" value="NZ_JANUCV010000001.1"/>
</dbReference>
<dbReference type="SMR" id="Q8R9L4"/>
<dbReference type="STRING" id="273068.TTE1593"/>
<dbReference type="KEGG" id="tte:TTE1593"/>
<dbReference type="eggNOG" id="COG0402">
    <property type="taxonomic scope" value="Bacteria"/>
</dbReference>
<dbReference type="HOGENOM" id="CLU_012358_2_1_9"/>
<dbReference type="OrthoDB" id="9807210at2"/>
<dbReference type="Proteomes" id="UP000000555">
    <property type="component" value="Chromosome"/>
</dbReference>
<dbReference type="GO" id="GO:0090614">
    <property type="term" value="F:5'-methylthioadenosine deaminase activity"/>
    <property type="evidence" value="ECO:0007669"/>
    <property type="project" value="UniProtKB-UniRule"/>
</dbReference>
<dbReference type="GO" id="GO:0046872">
    <property type="term" value="F:metal ion binding"/>
    <property type="evidence" value="ECO:0007669"/>
    <property type="project" value="UniProtKB-KW"/>
</dbReference>
<dbReference type="GO" id="GO:0050270">
    <property type="term" value="F:S-adenosylhomocysteine deaminase activity"/>
    <property type="evidence" value="ECO:0007669"/>
    <property type="project" value="UniProtKB-UniRule"/>
</dbReference>
<dbReference type="CDD" id="cd01298">
    <property type="entry name" value="ATZ_TRZ_like"/>
    <property type="match status" value="1"/>
</dbReference>
<dbReference type="FunFam" id="3.20.20.140:FF:000014">
    <property type="entry name" value="5-methylthioadenosine/S-adenosylhomocysteine deaminase"/>
    <property type="match status" value="1"/>
</dbReference>
<dbReference type="Gene3D" id="3.20.20.140">
    <property type="entry name" value="Metal-dependent hydrolases"/>
    <property type="match status" value="1"/>
</dbReference>
<dbReference type="Gene3D" id="2.30.40.10">
    <property type="entry name" value="Urease, subunit C, domain 1"/>
    <property type="match status" value="1"/>
</dbReference>
<dbReference type="HAMAP" id="MF_01281">
    <property type="entry name" value="MTA_SAH_deamin"/>
    <property type="match status" value="1"/>
</dbReference>
<dbReference type="InterPro" id="IPR006680">
    <property type="entry name" value="Amidohydro-rel"/>
</dbReference>
<dbReference type="InterPro" id="IPR023512">
    <property type="entry name" value="Deaminase_MtaD/DadD"/>
</dbReference>
<dbReference type="InterPro" id="IPR011059">
    <property type="entry name" value="Metal-dep_hydrolase_composite"/>
</dbReference>
<dbReference type="InterPro" id="IPR032466">
    <property type="entry name" value="Metal_Hydrolase"/>
</dbReference>
<dbReference type="InterPro" id="IPR050287">
    <property type="entry name" value="MTA/SAH_deaminase"/>
</dbReference>
<dbReference type="PANTHER" id="PTHR43794:SF11">
    <property type="entry name" value="AMIDOHYDROLASE-RELATED DOMAIN-CONTAINING PROTEIN"/>
    <property type="match status" value="1"/>
</dbReference>
<dbReference type="PANTHER" id="PTHR43794">
    <property type="entry name" value="AMINOHYDROLASE SSNA-RELATED"/>
    <property type="match status" value="1"/>
</dbReference>
<dbReference type="Pfam" id="PF01979">
    <property type="entry name" value="Amidohydro_1"/>
    <property type="match status" value="1"/>
</dbReference>
<dbReference type="SUPFAM" id="SSF51338">
    <property type="entry name" value="Composite domain of metallo-dependent hydrolases"/>
    <property type="match status" value="1"/>
</dbReference>
<dbReference type="SUPFAM" id="SSF51556">
    <property type="entry name" value="Metallo-dependent hydrolases"/>
    <property type="match status" value="1"/>
</dbReference>
<organism>
    <name type="scientific">Caldanaerobacter subterraneus subsp. tengcongensis (strain DSM 15242 / JCM 11007 / NBRC 100824 / MB4)</name>
    <name type="common">Thermoanaerobacter tengcongensis</name>
    <dbReference type="NCBI Taxonomy" id="273068"/>
    <lineage>
        <taxon>Bacteria</taxon>
        <taxon>Bacillati</taxon>
        <taxon>Bacillota</taxon>
        <taxon>Clostridia</taxon>
        <taxon>Thermoanaerobacterales</taxon>
        <taxon>Thermoanaerobacteraceae</taxon>
        <taxon>Caldanaerobacter</taxon>
    </lineage>
</organism>
<keyword id="KW-0378">Hydrolase</keyword>
<keyword id="KW-0479">Metal-binding</keyword>
<keyword id="KW-1185">Reference proteome</keyword>
<keyword id="KW-0862">Zinc</keyword>
<comment type="function">
    <text evidence="1">Catalyzes the deamination of 5-methylthioadenosine and S-adenosyl-L-homocysteine into 5-methylthioinosine and S-inosyl-L-homocysteine, respectively. Is also able to deaminate adenosine.</text>
</comment>
<comment type="catalytic activity">
    <reaction evidence="1">
        <text>S-adenosyl-L-homocysteine + H2O + H(+) = S-inosyl-L-homocysteine + NH4(+)</text>
        <dbReference type="Rhea" id="RHEA:20716"/>
        <dbReference type="ChEBI" id="CHEBI:15377"/>
        <dbReference type="ChEBI" id="CHEBI:15378"/>
        <dbReference type="ChEBI" id="CHEBI:28938"/>
        <dbReference type="ChEBI" id="CHEBI:57856"/>
        <dbReference type="ChEBI" id="CHEBI:57985"/>
        <dbReference type="EC" id="3.5.4.28"/>
    </reaction>
</comment>
<comment type="catalytic activity">
    <reaction evidence="1">
        <text>S-methyl-5'-thioadenosine + H2O + H(+) = S-methyl-5'-thioinosine + NH4(+)</text>
        <dbReference type="Rhea" id="RHEA:25025"/>
        <dbReference type="ChEBI" id="CHEBI:15377"/>
        <dbReference type="ChEBI" id="CHEBI:15378"/>
        <dbReference type="ChEBI" id="CHEBI:17509"/>
        <dbReference type="ChEBI" id="CHEBI:28938"/>
        <dbReference type="ChEBI" id="CHEBI:48595"/>
        <dbReference type="EC" id="3.5.4.31"/>
    </reaction>
</comment>
<comment type="cofactor">
    <cofactor evidence="1">
        <name>Zn(2+)</name>
        <dbReference type="ChEBI" id="CHEBI:29105"/>
    </cofactor>
    <text evidence="1">Binds 1 zinc ion per subunit.</text>
</comment>
<comment type="similarity">
    <text evidence="1">Belongs to the metallo-dependent hydrolases superfamily. MTA/SAH deaminase family.</text>
</comment>
<sequence length="433" mass="48350">MNLLIKNVNLLSMEEDKVLEGVNVYVEGDTIKHIGELLPDVKVDVVIEGKDKLAMPGLINAHTHLGMSLFRNYANDVPLFDWLTKYIWPLEARLTAEDVYWGSLLSMIEMIYSGTTTYCDMYFFMEEVAKATEEIGIRGVISRGIIEEQDAKVNEEKLKDTENLYNAWNGKAEGRIKVMVGPHAPYTCGPTYLKEILDLAKRLGTGIHIHVSETKREVEESLEKYGKTPVQHLKDLGIFEVPTVAAHCVHLTDEDIEVLKEMKVSPVYNPTSNLKLASGFAPVEKMLKKGINVALGTDGPASNNNLNMFEEIHFAATINKALNEDALSVPAFEALKMATVSGARALLWEREIGTIEVGKKADVILIDLNKPHLHPKNDLISALAYSVQGSDVDTVIVNGKVIMEKREIKTVDVERVYYEVEKRAQNLIRGEIS</sequence>
<accession>Q8R9L4</accession>
<feature type="chain" id="PRO_0000312464" description="5-methylthioadenosine/S-adenosylhomocysteine deaminase">
    <location>
        <begin position="1"/>
        <end position="433"/>
    </location>
</feature>
<feature type="binding site" evidence="1">
    <location>
        <position position="62"/>
    </location>
    <ligand>
        <name>Zn(2+)</name>
        <dbReference type="ChEBI" id="CHEBI:29105"/>
    </ligand>
</feature>
<feature type="binding site" evidence="1">
    <location>
        <position position="64"/>
    </location>
    <ligand>
        <name>Zn(2+)</name>
        <dbReference type="ChEBI" id="CHEBI:29105"/>
    </ligand>
</feature>
<feature type="binding site" evidence="1">
    <location>
        <position position="91"/>
    </location>
    <ligand>
        <name>substrate</name>
    </ligand>
</feature>
<feature type="binding site" evidence="1">
    <location>
        <position position="143"/>
    </location>
    <ligand>
        <name>substrate</name>
    </ligand>
</feature>
<feature type="binding site" evidence="1">
    <location>
        <position position="183"/>
    </location>
    <ligand>
        <name>substrate</name>
    </ligand>
</feature>
<feature type="binding site" evidence="1">
    <location>
        <position position="210"/>
    </location>
    <ligand>
        <name>Zn(2+)</name>
        <dbReference type="ChEBI" id="CHEBI:29105"/>
    </ligand>
</feature>
<feature type="binding site" evidence="1">
    <location>
        <position position="213"/>
    </location>
    <ligand>
        <name>substrate</name>
    </ligand>
</feature>
<feature type="binding site" evidence="1">
    <location>
        <position position="298"/>
    </location>
    <ligand>
        <name>substrate</name>
    </ligand>
</feature>
<feature type="binding site" evidence="1">
    <location>
        <position position="298"/>
    </location>
    <ligand>
        <name>Zn(2+)</name>
        <dbReference type="ChEBI" id="CHEBI:29105"/>
    </ligand>
</feature>
<proteinExistence type="inferred from homology"/>
<evidence type="ECO:0000255" key="1">
    <source>
        <dbReference type="HAMAP-Rule" id="MF_01281"/>
    </source>
</evidence>